<protein>
    <recommendedName>
        <fullName>Suppressor of tumorigenicity 7 protein</fullName>
    </recommendedName>
</protein>
<reference key="1">
    <citation type="journal article" date="2003" name="Nature">
        <title>Comparative analyses of multi-species sequences from targeted genomic regions.</title>
        <authorList>
            <person name="Thomas J.W."/>
            <person name="Touchman J.W."/>
            <person name="Blakesley R.W."/>
            <person name="Bouffard G.G."/>
            <person name="Beckstrom-Sternberg S.M."/>
            <person name="Margulies E.H."/>
            <person name="Blanchette M."/>
            <person name="Siepel A.C."/>
            <person name="Thomas P.J."/>
            <person name="McDowell J.C."/>
            <person name="Maskeri B."/>
            <person name="Hansen N.F."/>
            <person name="Schwartz M.S."/>
            <person name="Weber R.J."/>
            <person name="Kent W.J."/>
            <person name="Karolchik D."/>
            <person name="Bruen T.C."/>
            <person name="Bevan R."/>
            <person name="Cutler D.J."/>
            <person name="Schwartz S."/>
            <person name="Elnitski L."/>
            <person name="Idol J.R."/>
            <person name="Prasad A.B."/>
            <person name="Lee-Lin S.-Q."/>
            <person name="Maduro V.V.B."/>
            <person name="Summers T.J."/>
            <person name="Portnoy M.E."/>
            <person name="Dietrich N.L."/>
            <person name="Akhter N."/>
            <person name="Ayele K."/>
            <person name="Benjamin B."/>
            <person name="Cariaga K."/>
            <person name="Brinkley C.P."/>
            <person name="Brooks S.Y."/>
            <person name="Granite S."/>
            <person name="Guan X."/>
            <person name="Gupta J."/>
            <person name="Haghighi P."/>
            <person name="Ho S.-L."/>
            <person name="Huang M.C."/>
            <person name="Karlins E."/>
            <person name="Laric P.L."/>
            <person name="Legaspi R."/>
            <person name="Lim M.J."/>
            <person name="Maduro Q.L."/>
            <person name="Masiello C.A."/>
            <person name="Mastrian S.D."/>
            <person name="McCloskey J.C."/>
            <person name="Pearson R."/>
            <person name="Stantripop S."/>
            <person name="Tiongson E.E."/>
            <person name="Tran J.T."/>
            <person name="Tsurgeon C."/>
            <person name="Vogt J.L."/>
            <person name="Walker M.A."/>
            <person name="Wetherby K.D."/>
            <person name="Wiggins L.S."/>
            <person name="Young A.C."/>
            <person name="Zhang L.-H."/>
            <person name="Osoegawa K."/>
            <person name="Zhu B."/>
            <person name="Zhao B."/>
            <person name="Shu C.L."/>
            <person name="De Jong P.J."/>
            <person name="Lawrence C.E."/>
            <person name="Smit A.F."/>
            <person name="Chakravarti A."/>
            <person name="Haussler D."/>
            <person name="Green P."/>
            <person name="Miller W."/>
            <person name="Green E.D."/>
        </authorList>
    </citation>
    <scope>NUCLEOTIDE SEQUENCE [LARGE SCALE GENOMIC DNA]</scope>
</reference>
<accession>Q2QLD7</accession>
<dbReference type="EMBL" id="DP000017">
    <property type="protein sequence ID" value="AAR16303.2"/>
    <property type="molecule type" value="Genomic_DNA"/>
</dbReference>
<dbReference type="RefSeq" id="XP_020934069.1">
    <property type="nucleotide sequence ID" value="XM_021078410.1"/>
</dbReference>
<dbReference type="FunCoup" id="Q2QLD7">
    <property type="interactions" value="639"/>
</dbReference>
<dbReference type="STRING" id="9823.ENSSSCP00000053765"/>
<dbReference type="GlyCosmos" id="Q2QLD7">
    <property type="glycosylation" value="1 site, No reported glycans"/>
</dbReference>
<dbReference type="GlyGen" id="Q2QLD7">
    <property type="glycosylation" value="1 site"/>
</dbReference>
<dbReference type="PaxDb" id="9823-ENSSSCP00000017615"/>
<dbReference type="Ensembl" id="ENSSSCT00000057393.3">
    <property type="protein sequence ID" value="ENSSSCP00000053765.2"/>
    <property type="gene ID" value="ENSSSCG00000016629.5"/>
</dbReference>
<dbReference type="Ensembl" id="ENSSSCT00025094101.1">
    <property type="protein sequence ID" value="ENSSSCP00025041303.1"/>
    <property type="gene ID" value="ENSSSCG00025067439.1"/>
</dbReference>
<dbReference type="Ensembl" id="ENSSSCT00030096207.1">
    <property type="protein sequence ID" value="ENSSSCP00030044352.1"/>
    <property type="gene ID" value="ENSSSCG00030068747.1"/>
</dbReference>
<dbReference type="Ensembl" id="ENSSSCT00035029683.1">
    <property type="protein sequence ID" value="ENSSSCP00035011482.1"/>
    <property type="gene ID" value="ENSSSCG00035022721.1"/>
</dbReference>
<dbReference type="Ensembl" id="ENSSSCT00040053685.1">
    <property type="protein sequence ID" value="ENSSSCP00040022360.1"/>
    <property type="gene ID" value="ENSSSCG00040040022.1"/>
</dbReference>
<dbReference type="Ensembl" id="ENSSSCT00045033875.1">
    <property type="protein sequence ID" value="ENSSSCP00045023481.1"/>
    <property type="gene ID" value="ENSSSCG00045019838.1"/>
</dbReference>
<dbReference type="Ensembl" id="ENSSSCT00050055259.1">
    <property type="protein sequence ID" value="ENSSSCP00050023402.1"/>
    <property type="gene ID" value="ENSSSCG00050040769.1"/>
</dbReference>
<dbReference type="Ensembl" id="ENSSSCT00055040253.1">
    <property type="protein sequence ID" value="ENSSSCP00055032025.1"/>
    <property type="gene ID" value="ENSSSCG00055020512.1"/>
</dbReference>
<dbReference type="Ensembl" id="ENSSSCT00060094092.1">
    <property type="protein sequence ID" value="ENSSSCP00060040711.1"/>
    <property type="gene ID" value="ENSSSCG00060068810.1"/>
</dbReference>
<dbReference type="Ensembl" id="ENSSSCT00065099078.1">
    <property type="protein sequence ID" value="ENSSSCP00065043474.1"/>
    <property type="gene ID" value="ENSSSCG00065071978.1"/>
</dbReference>
<dbReference type="Ensembl" id="ENSSSCT00070057534.1">
    <property type="protein sequence ID" value="ENSSSCP00070048918.1"/>
    <property type="gene ID" value="ENSSSCG00070028628.1"/>
</dbReference>
<dbReference type="Ensembl" id="ENSSSCT00115019218">
    <property type="protein sequence ID" value="ENSSSCP00115018175"/>
    <property type="gene ID" value="ENSSSCG00115010171"/>
</dbReference>
<dbReference type="GeneID" id="100125380"/>
<dbReference type="VGNC" id="VGNC:111878">
    <property type="gene designation" value="ST7"/>
</dbReference>
<dbReference type="eggNOG" id="KOG3807">
    <property type="taxonomic scope" value="Eukaryota"/>
</dbReference>
<dbReference type="GeneTree" id="ENSGT00390000000873"/>
<dbReference type="InParanoid" id="Q2QLD7"/>
<dbReference type="Proteomes" id="UP000008227">
    <property type="component" value="Chromosome 18"/>
</dbReference>
<dbReference type="Proteomes" id="UP000314985">
    <property type="component" value="Chromosome 18"/>
</dbReference>
<dbReference type="Proteomes" id="UP000694570">
    <property type="component" value="Unplaced"/>
</dbReference>
<dbReference type="Proteomes" id="UP000694571">
    <property type="component" value="Unplaced"/>
</dbReference>
<dbReference type="Proteomes" id="UP000694720">
    <property type="component" value="Unplaced"/>
</dbReference>
<dbReference type="Proteomes" id="UP000694722">
    <property type="component" value="Unplaced"/>
</dbReference>
<dbReference type="Proteomes" id="UP000694723">
    <property type="component" value="Unplaced"/>
</dbReference>
<dbReference type="Proteomes" id="UP000694724">
    <property type="component" value="Unplaced"/>
</dbReference>
<dbReference type="Proteomes" id="UP000694725">
    <property type="component" value="Unplaced"/>
</dbReference>
<dbReference type="Proteomes" id="UP000694726">
    <property type="component" value="Unplaced"/>
</dbReference>
<dbReference type="Proteomes" id="UP000694727">
    <property type="component" value="Unplaced"/>
</dbReference>
<dbReference type="Proteomes" id="UP000694728">
    <property type="component" value="Unplaced"/>
</dbReference>
<dbReference type="Bgee" id="ENSSSCG00000016629">
    <property type="expression patterns" value="Expressed in cerebellum and 43 other cell types or tissues"/>
</dbReference>
<dbReference type="ExpressionAtlas" id="Q2QLD7">
    <property type="expression patterns" value="baseline and differential"/>
</dbReference>
<dbReference type="GO" id="GO:0016020">
    <property type="term" value="C:membrane"/>
    <property type="evidence" value="ECO:0007669"/>
    <property type="project" value="UniProtKB-SubCell"/>
</dbReference>
<dbReference type="CDD" id="cd11557">
    <property type="entry name" value="ST7"/>
    <property type="match status" value="1"/>
</dbReference>
<dbReference type="InterPro" id="IPR007311">
    <property type="entry name" value="ST7"/>
</dbReference>
<dbReference type="PANTHER" id="PTHR12745">
    <property type="entry name" value="SUPPRESSION OF TUMORIGENICITY 7"/>
    <property type="match status" value="1"/>
</dbReference>
<dbReference type="PANTHER" id="PTHR12745:SF10">
    <property type="entry name" value="SUPPRESSOR OF TUMORIGENICITY 7 PROTEIN"/>
    <property type="match status" value="1"/>
</dbReference>
<dbReference type="Pfam" id="PF04184">
    <property type="entry name" value="ST7"/>
    <property type="match status" value="1"/>
</dbReference>
<comment type="subcellular location">
    <subcellularLocation>
        <location evidence="3">Membrane</location>
        <topology evidence="3">Multi-pass membrane protein</topology>
    </subcellularLocation>
</comment>
<comment type="similarity">
    <text evidence="3">Belongs to the ST7 family.</text>
</comment>
<proteinExistence type="inferred from homology"/>
<feature type="chain" id="PRO_0000339212" description="Suppressor of tumorigenicity 7 protein">
    <location>
        <begin position="1"/>
        <end position="585"/>
    </location>
</feature>
<feature type="transmembrane region" description="Helical" evidence="2">
    <location>
        <begin position="15"/>
        <end position="35"/>
    </location>
</feature>
<feature type="transmembrane region" description="Helical" evidence="2">
    <location>
        <begin position="62"/>
        <end position="82"/>
    </location>
</feature>
<feature type="transmembrane region" description="Helical" evidence="2">
    <location>
        <begin position="512"/>
        <end position="532"/>
    </location>
</feature>
<feature type="modified residue" description="Phosphoserine" evidence="1">
    <location>
        <position position="386"/>
    </location>
</feature>
<feature type="glycosylation site" description="N-linked (GlcNAc...) asparagine" evidence="2">
    <location>
        <position position="47"/>
    </location>
</feature>
<gene>
    <name type="primary">ST7</name>
</gene>
<evidence type="ECO:0000250" key="1">
    <source>
        <dbReference type="UniProtKB" id="Q9NRC1"/>
    </source>
</evidence>
<evidence type="ECO:0000255" key="2"/>
<evidence type="ECO:0000305" key="3"/>
<keyword id="KW-0325">Glycoprotein</keyword>
<keyword id="KW-0472">Membrane</keyword>
<keyword id="KW-0597">Phosphoprotein</keyword>
<keyword id="KW-1185">Reference proteome</keyword>
<keyword id="KW-0812">Transmembrane</keyword>
<keyword id="KW-1133">Transmembrane helix</keyword>
<organism>
    <name type="scientific">Sus scrofa</name>
    <name type="common">Pig</name>
    <dbReference type="NCBI Taxonomy" id="9823"/>
    <lineage>
        <taxon>Eukaryota</taxon>
        <taxon>Metazoa</taxon>
        <taxon>Chordata</taxon>
        <taxon>Craniata</taxon>
        <taxon>Vertebrata</taxon>
        <taxon>Euteleostomi</taxon>
        <taxon>Mammalia</taxon>
        <taxon>Eutheria</taxon>
        <taxon>Laurasiatheria</taxon>
        <taxon>Artiodactyla</taxon>
        <taxon>Suina</taxon>
        <taxon>Suidae</taxon>
        <taxon>Sus</taxon>
    </lineage>
</organism>
<name>ST7_PIG</name>
<sequence>MAEAGTGFLEQLKSCIVWSWTYLWTVWFFIVLFLVYILRVPLKINDNLSTVSMFLNTLTPKFYVALTGTSSLISGLILIFEWWYFRKYGTSFIEQVSVSHLRPLLGGVDNNSSNNSNSSNGDSDSNRQSVSECKVWRNPLNLFRGAEYNRYTWVTGREPLTYYDMNLSAQDHQTFFTCDSDHLRPADAIMQKAWRERNPQARISAAHEALEINEIRSRVEVPLIASSTIWEIKLLPKCATAYILLAEEEATTIAEAEKLFKQALKAGDGCYRRSQQLQHHGSQYEAQHRRDTNVLVYIKRRLAMCARRLGRTREAVKMMRDLMKEFPLLSMFNIHENLLEALLELQAYADVQAVLAKYDDISLPKSATICYTAALLKARAVSDKFSPEAASRRGLSTAEMNAVEAIHRAVEFNPHVPKYLLEMKSLILPPEHILKRGDSEAIAYAFFHLAHWKRVEGALNLLHCTWEGTFRMIPYPLEKGHLFYPYPICTETADRELLPSFHEVSVYPKKELPFFILFTAGLCSFTAMLALLTHQFPELMGVFAKAMIDIFCSAEFRDWNCKSIFMRVEDELEIPPAPQSQHFQN</sequence>